<comment type="function">
    <text evidence="1">Catalyzes the acyloin condensation reaction between C atoms 2 and 3 of pyruvate and glyceraldehyde 3-phosphate to yield 1-deoxy-D-xylulose-5-phosphate (DXP).</text>
</comment>
<comment type="catalytic activity">
    <reaction evidence="1">
        <text>D-glyceraldehyde 3-phosphate + pyruvate + H(+) = 1-deoxy-D-xylulose 5-phosphate + CO2</text>
        <dbReference type="Rhea" id="RHEA:12605"/>
        <dbReference type="ChEBI" id="CHEBI:15361"/>
        <dbReference type="ChEBI" id="CHEBI:15378"/>
        <dbReference type="ChEBI" id="CHEBI:16526"/>
        <dbReference type="ChEBI" id="CHEBI:57792"/>
        <dbReference type="ChEBI" id="CHEBI:59776"/>
        <dbReference type="EC" id="2.2.1.7"/>
    </reaction>
</comment>
<comment type="cofactor">
    <cofactor evidence="1">
        <name>Mg(2+)</name>
        <dbReference type="ChEBI" id="CHEBI:18420"/>
    </cofactor>
    <text evidence="1">Binds 1 Mg(2+) ion per subunit.</text>
</comment>
<comment type="cofactor">
    <cofactor evidence="1">
        <name>thiamine diphosphate</name>
        <dbReference type="ChEBI" id="CHEBI:58937"/>
    </cofactor>
    <text evidence="1">Binds 1 thiamine pyrophosphate per subunit.</text>
</comment>
<comment type="pathway">
    <text evidence="1">Metabolic intermediate biosynthesis; 1-deoxy-D-xylulose 5-phosphate biosynthesis; 1-deoxy-D-xylulose 5-phosphate from D-glyceraldehyde 3-phosphate and pyruvate: step 1/1.</text>
</comment>
<comment type="subunit">
    <text evidence="1">Homodimer.</text>
</comment>
<comment type="similarity">
    <text evidence="1">Belongs to the transketolase family. DXPS subfamily.</text>
</comment>
<organism>
    <name type="scientific">Shewanella sp. (strain MR-4)</name>
    <dbReference type="NCBI Taxonomy" id="60480"/>
    <lineage>
        <taxon>Bacteria</taxon>
        <taxon>Pseudomonadati</taxon>
        <taxon>Pseudomonadota</taxon>
        <taxon>Gammaproteobacteria</taxon>
        <taxon>Alteromonadales</taxon>
        <taxon>Shewanellaceae</taxon>
        <taxon>Shewanella</taxon>
    </lineage>
</organism>
<dbReference type="EC" id="2.2.1.7" evidence="1"/>
<dbReference type="EMBL" id="CP000446">
    <property type="protein sequence ID" value="ABI39802.1"/>
    <property type="molecule type" value="Genomic_DNA"/>
</dbReference>
<dbReference type="RefSeq" id="WP_011623482.1">
    <property type="nucleotide sequence ID" value="NC_008321.1"/>
</dbReference>
<dbReference type="SMR" id="Q0HGL5"/>
<dbReference type="KEGG" id="she:Shewmr4_2731"/>
<dbReference type="HOGENOM" id="CLU_009227_1_4_6"/>
<dbReference type="UniPathway" id="UPA00064">
    <property type="reaction ID" value="UER00091"/>
</dbReference>
<dbReference type="GO" id="GO:0005829">
    <property type="term" value="C:cytosol"/>
    <property type="evidence" value="ECO:0007669"/>
    <property type="project" value="TreeGrafter"/>
</dbReference>
<dbReference type="GO" id="GO:0008661">
    <property type="term" value="F:1-deoxy-D-xylulose-5-phosphate synthase activity"/>
    <property type="evidence" value="ECO:0007669"/>
    <property type="project" value="UniProtKB-UniRule"/>
</dbReference>
<dbReference type="GO" id="GO:0000287">
    <property type="term" value="F:magnesium ion binding"/>
    <property type="evidence" value="ECO:0007669"/>
    <property type="project" value="UniProtKB-UniRule"/>
</dbReference>
<dbReference type="GO" id="GO:0030976">
    <property type="term" value="F:thiamine pyrophosphate binding"/>
    <property type="evidence" value="ECO:0007669"/>
    <property type="project" value="UniProtKB-UniRule"/>
</dbReference>
<dbReference type="GO" id="GO:0052865">
    <property type="term" value="P:1-deoxy-D-xylulose 5-phosphate biosynthetic process"/>
    <property type="evidence" value="ECO:0007669"/>
    <property type="project" value="UniProtKB-UniPathway"/>
</dbReference>
<dbReference type="GO" id="GO:0019288">
    <property type="term" value="P:isopentenyl diphosphate biosynthetic process, methylerythritol 4-phosphate pathway"/>
    <property type="evidence" value="ECO:0007669"/>
    <property type="project" value="TreeGrafter"/>
</dbReference>
<dbReference type="GO" id="GO:0016114">
    <property type="term" value="P:terpenoid biosynthetic process"/>
    <property type="evidence" value="ECO:0007669"/>
    <property type="project" value="UniProtKB-UniRule"/>
</dbReference>
<dbReference type="GO" id="GO:0009228">
    <property type="term" value="P:thiamine biosynthetic process"/>
    <property type="evidence" value="ECO:0007669"/>
    <property type="project" value="UniProtKB-UniRule"/>
</dbReference>
<dbReference type="CDD" id="cd02007">
    <property type="entry name" value="TPP_DXS"/>
    <property type="match status" value="1"/>
</dbReference>
<dbReference type="CDD" id="cd07033">
    <property type="entry name" value="TPP_PYR_DXS_TK_like"/>
    <property type="match status" value="1"/>
</dbReference>
<dbReference type="FunFam" id="3.40.50.920:FF:000002">
    <property type="entry name" value="1-deoxy-D-xylulose-5-phosphate synthase"/>
    <property type="match status" value="1"/>
</dbReference>
<dbReference type="FunFam" id="3.40.50.970:FF:000005">
    <property type="entry name" value="1-deoxy-D-xylulose-5-phosphate synthase"/>
    <property type="match status" value="1"/>
</dbReference>
<dbReference type="Gene3D" id="3.40.50.920">
    <property type="match status" value="1"/>
</dbReference>
<dbReference type="Gene3D" id="3.40.50.970">
    <property type="match status" value="2"/>
</dbReference>
<dbReference type="HAMAP" id="MF_00315">
    <property type="entry name" value="DXP_synth"/>
    <property type="match status" value="1"/>
</dbReference>
<dbReference type="InterPro" id="IPR005477">
    <property type="entry name" value="Dxylulose-5-P_synthase"/>
</dbReference>
<dbReference type="InterPro" id="IPR029061">
    <property type="entry name" value="THDP-binding"/>
</dbReference>
<dbReference type="InterPro" id="IPR009014">
    <property type="entry name" value="Transketo_C/PFOR_II"/>
</dbReference>
<dbReference type="InterPro" id="IPR005475">
    <property type="entry name" value="Transketolase-like_Pyr-bd"/>
</dbReference>
<dbReference type="InterPro" id="IPR020826">
    <property type="entry name" value="Transketolase_BS"/>
</dbReference>
<dbReference type="InterPro" id="IPR033248">
    <property type="entry name" value="Transketolase_C"/>
</dbReference>
<dbReference type="InterPro" id="IPR049557">
    <property type="entry name" value="Transketolase_CS"/>
</dbReference>
<dbReference type="NCBIfam" id="TIGR00204">
    <property type="entry name" value="dxs"/>
    <property type="match status" value="1"/>
</dbReference>
<dbReference type="NCBIfam" id="NF003933">
    <property type="entry name" value="PRK05444.2-2"/>
    <property type="match status" value="1"/>
</dbReference>
<dbReference type="PANTHER" id="PTHR43322">
    <property type="entry name" value="1-D-DEOXYXYLULOSE 5-PHOSPHATE SYNTHASE-RELATED"/>
    <property type="match status" value="1"/>
</dbReference>
<dbReference type="PANTHER" id="PTHR43322:SF5">
    <property type="entry name" value="1-DEOXY-D-XYLULOSE-5-PHOSPHATE SYNTHASE, CHLOROPLASTIC"/>
    <property type="match status" value="1"/>
</dbReference>
<dbReference type="Pfam" id="PF13292">
    <property type="entry name" value="DXP_synthase_N"/>
    <property type="match status" value="1"/>
</dbReference>
<dbReference type="Pfam" id="PF02779">
    <property type="entry name" value="Transket_pyr"/>
    <property type="match status" value="1"/>
</dbReference>
<dbReference type="Pfam" id="PF02780">
    <property type="entry name" value="Transketolase_C"/>
    <property type="match status" value="1"/>
</dbReference>
<dbReference type="SMART" id="SM00861">
    <property type="entry name" value="Transket_pyr"/>
    <property type="match status" value="1"/>
</dbReference>
<dbReference type="SUPFAM" id="SSF52518">
    <property type="entry name" value="Thiamin diphosphate-binding fold (THDP-binding)"/>
    <property type="match status" value="2"/>
</dbReference>
<dbReference type="SUPFAM" id="SSF52922">
    <property type="entry name" value="TK C-terminal domain-like"/>
    <property type="match status" value="1"/>
</dbReference>
<dbReference type="PROSITE" id="PS00801">
    <property type="entry name" value="TRANSKETOLASE_1"/>
    <property type="match status" value="1"/>
</dbReference>
<dbReference type="PROSITE" id="PS00802">
    <property type="entry name" value="TRANSKETOLASE_2"/>
    <property type="match status" value="1"/>
</dbReference>
<reference key="1">
    <citation type="submission" date="2006-08" db="EMBL/GenBank/DDBJ databases">
        <title>Complete sequence of Shewanella sp. MR-4.</title>
        <authorList>
            <consortium name="US DOE Joint Genome Institute"/>
            <person name="Copeland A."/>
            <person name="Lucas S."/>
            <person name="Lapidus A."/>
            <person name="Barry K."/>
            <person name="Detter J.C."/>
            <person name="Glavina del Rio T."/>
            <person name="Hammon N."/>
            <person name="Israni S."/>
            <person name="Dalin E."/>
            <person name="Tice H."/>
            <person name="Pitluck S."/>
            <person name="Kiss H."/>
            <person name="Brettin T."/>
            <person name="Bruce D."/>
            <person name="Han C."/>
            <person name="Tapia R."/>
            <person name="Gilna P."/>
            <person name="Schmutz J."/>
            <person name="Larimer F."/>
            <person name="Land M."/>
            <person name="Hauser L."/>
            <person name="Kyrpides N."/>
            <person name="Mikhailova N."/>
            <person name="Nealson K."/>
            <person name="Konstantinidis K."/>
            <person name="Klappenbach J."/>
            <person name="Tiedje J."/>
            <person name="Richardson P."/>
        </authorList>
    </citation>
    <scope>NUCLEOTIDE SEQUENCE [LARGE SCALE GENOMIC DNA]</scope>
    <source>
        <strain>MR-4</strain>
    </source>
</reference>
<evidence type="ECO:0000255" key="1">
    <source>
        <dbReference type="HAMAP-Rule" id="MF_00315"/>
    </source>
</evidence>
<accession>Q0HGL5</accession>
<protein>
    <recommendedName>
        <fullName evidence="1">1-deoxy-D-xylulose-5-phosphate synthase</fullName>
        <ecNumber evidence="1">2.2.1.7</ecNumber>
    </recommendedName>
    <alternativeName>
        <fullName evidence="1">1-deoxyxylulose-5-phosphate synthase</fullName>
        <shortName evidence="1">DXP synthase</shortName>
        <shortName evidence="1">DXPS</shortName>
    </alternativeName>
</protein>
<keyword id="KW-0414">Isoprene biosynthesis</keyword>
<keyword id="KW-0460">Magnesium</keyword>
<keyword id="KW-0479">Metal-binding</keyword>
<keyword id="KW-0784">Thiamine biosynthesis</keyword>
<keyword id="KW-0786">Thiamine pyrophosphate</keyword>
<keyword id="KW-0808">Transferase</keyword>
<sequence length="622" mass="68026">MSLDISQFPVLAQANTPNELRQLPQALLPQLADELREFLLKSVGMSSGHFASGLGTVELTVALHYVYNTPFDRLIWDVGHQAYPHKILTGRRDRMHTIRQKNGLHPFPWREESEYDTFSVGHSGTSISAALAMAVAAEKEQAGRKVVAVIGDGAMTGGMVFEAMNHAGDLHNDMLMVLNDNEMSISENVGALNNHLAQLMSGRLYTTIRESSKKVLKGMPVIKEMAKRTEEHLKGMVVPGTLFEELGFNYIGPIDGHDVDALVETLRNMRSLKGPQVLHIMTKKGRGYEPAEKDPIGWHAVPKFDPSQFKKPATKPGLPTFSQVFGKWLCDIAEQDEKVLGITPAMREGSGMVEFSQRFPKQYFDAAIAEQHAVTLGAGFACEGFKPVVAIYSTFLQRGYDQLIHDVALQRLPVLFAIDRGGIVGADGPTHQGAFDLSFMRCIPNMVIMAPSDENECRQMLYTGYCYDAGPSAVRYPRGSATGATQVEAMTALPIGKGVIKRLGKRIAMLNFGTTLAAALTAAESLDATVVDMRFVKPLDVDLVKEMAQTHDVLVTVEENAIMGGAGSGVLELLQKLKMPKPVLQIGLPDEFIKHGSPEEVTHDLQLDAEGMLAQINAFLAD</sequence>
<name>DXS_SHESM</name>
<feature type="chain" id="PRO_1000019080" description="1-deoxy-D-xylulose-5-phosphate synthase">
    <location>
        <begin position="1"/>
        <end position="622"/>
    </location>
</feature>
<feature type="binding site" evidence="1">
    <location>
        <position position="80"/>
    </location>
    <ligand>
        <name>thiamine diphosphate</name>
        <dbReference type="ChEBI" id="CHEBI:58937"/>
    </ligand>
</feature>
<feature type="binding site" evidence="1">
    <location>
        <begin position="121"/>
        <end position="123"/>
    </location>
    <ligand>
        <name>thiamine diphosphate</name>
        <dbReference type="ChEBI" id="CHEBI:58937"/>
    </ligand>
</feature>
<feature type="binding site" evidence="1">
    <location>
        <position position="152"/>
    </location>
    <ligand>
        <name>Mg(2+)</name>
        <dbReference type="ChEBI" id="CHEBI:18420"/>
    </ligand>
</feature>
<feature type="binding site" evidence="1">
    <location>
        <begin position="153"/>
        <end position="154"/>
    </location>
    <ligand>
        <name>thiamine diphosphate</name>
        <dbReference type="ChEBI" id="CHEBI:58937"/>
    </ligand>
</feature>
<feature type="binding site" evidence="1">
    <location>
        <position position="181"/>
    </location>
    <ligand>
        <name>Mg(2+)</name>
        <dbReference type="ChEBI" id="CHEBI:18420"/>
    </ligand>
</feature>
<feature type="binding site" evidence="1">
    <location>
        <position position="181"/>
    </location>
    <ligand>
        <name>thiamine diphosphate</name>
        <dbReference type="ChEBI" id="CHEBI:58937"/>
    </ligand>
</feature>
<feature type="binding site" evidence="1">
    <location>
        <position position="288"/>
    </location>
    <ligand>
        <name>thiamine diphosphate</name>
        <dbReference type="ChEBI" id="CHEBI:58937"/>
    </ligand>
</feature>
<feature type="binding site" evidence="1">
    <location>
        <position position="370"/>
    </location>
    <ligand>
        <name>thiamine diphosphate</name>
        <dbReference type="ChEBI" id="CHEBI:58937"/>
    </ligand>
</feature>
<gene>
    <name evidence="1" type="primary">dxs</name>
    <name type="ordered locus">Shewmr4_2731</name>
</gene>
<proteinExistence type="inferred from homology"/>